<gene>
    <name type="ordered locus">MJ0533</name>
</gene>
<feature type="chain" id="PRO_0000159138" description="Uncharacterized ferredoxin MJ0533">
    <location>
        <begin position="1"/>
        <end position="56"/>
    </location>
</feature>
<feature type="domain" description="4Fe-4S ferredoxin-type 1" evidence="2">
    <location>
        <begin position="2"/>
        <end position="28"/>
    </location>
</feature>
<feature type="domain" description="4Fe-4S ferredoxin-type 2" evidence="2">
    <location>
        <begin position="29"/>
        <end position="56"/>
    </location>
</feature>
<feature type="binding site" evidence="1">
    <location>
        <position position="9"/>
    </location>
    <ligand>
        <name>[4Fe-4S] cluster</name>
        <dbReference type="ChEBI" id="CHEBI:49883"/>
        <label>1</label>
    </ligand>
</feature>
<feature type="binding site" evidence="1">
    <location>
        <position position="12"/>
    </location>
    <ligand>
        <name>[4Fe-4S] cluster</name>
        <dbReference type="ChEBI" id="CHEBI:49883"/>
        <label>1</label>
    </ligand>
</feature>
<feature type="binding site" evidence="1">
    <location>
        <position position="15"/>
    </location>
    <ligand>
        <name>[4Fe-4S] cluster</name>
        <dbReference type="ChEBI" id="CHEBI:49883"/>
        <label>1</label>
    </ligand>
</feature>
<feature type="binding site" evidence="1">
    <location>
        <position position="19"/>
    </location>
    <ligand>
        <name>[4Fe-4S] cluster</name>
        <dbReference type="ChEBI" id="CHEBI:49883"/>
        <label>2</label>
    </ligand>
</feature>
<feature type="binding site" evidence="1">
    <location>
        <position position="38"/>
    </location>
    <ligand>
        <name>[4Fe-4S] cluster</name>
        <dbReference type="ChEBI" id="CHEBI:49883"/>
        <label>2</label>
    </ligand>
</feature>
<feature type="binding site" evidence="1">
    <location>
        <position position="41"/>
    </location>
    <ligand>
        <name>[4Fe-4S] cluster</name>
        <dbReference type="ChEBI" id="CHEBI:49883"/>
        <label>2</label>
    </ligand>
</feature>
<feature type="binding site" evidence="1">
    <location>
        <position position="44"/>
    </location>
    <ligand>
        <name>[4Fe-4S] cluster</name>
        <dbReference type="ChEBI" id="CHEBI:49883"/>
        <label>2</label>
    </ligand>
</feature>
<feature type="binding site" evidence="1">
    <location>
        <position position="48"/>
    </location>
    <ligand>
        <name>[4Fe-4S] cluster</name>
        <dbReference type="ChEBI" id="CHEBI:49883"/>
        <label>1</label>
    </ligand>
</feature>
<accession>Q57953</accession>
<protein>
    <recommendedName>
        <fullName>Uncharacterized ferredoxin MJ0533</fullName>
    </recommendedName>
</protein>
<keyword id="KW-0004">4Fe-4S</keyword>
<keyword id="KW-0249">Electron transport</keyword>
<keyword id="KW-0408">Iron</keyword>
<keyword id="KW-0411">Iron-sulfur</keyword>
<keyword id="KW-0479">Metal-binding</keyword>
<keyword id="KW-1185">Reference proteome</keyword>
<keyword id="KW-0677">Repeat</keyword>
<keyword id="KW-0813">Transport</keyword>
<dbReference type="EMBL" id="L77117">
    <property type="protein sequence ID" value="AAB98524.1"/>
    <property type="molecule type" value="Genomic_DNA"/>
</dbReference>
<dbReference type="PIR" id="E64366">
    <property type="entry name" value="E64366"/>
</dbReference>
<dbReference type="RefSeq" id="WP_010870037.1">
    <property type="nucleotide sequence ID" value="NC_000909.1"/>
</dbReference>
<dbReference type="SMR" id="Q57953"/>
<dbReference type="STRING" id="243232.MJ_0533"/>
<dbReference type="PaxDb" id="243232-MJ_0533"/>
<dbReference type="EnsemblBacteria" id="AAB98524">
    <property type="protein sequence ID" value="AAB98524"/>
    <property type="gene ID" value="MJ_0533"/>
</dbReference>
<dbReference type="GeneID" id="1451398"/>
<dbReference type="KEGG" id="mja:MJ_0533"/>
<dbReference type="eggNOG" id="arCOG00958">
    <property type="taxonomic scope" value="Archaea"/>
</dbReference>
<dbReference type="HOGENOM" id="CLU_139698_11_4_2"/>
<dbReference type="InParanoid" id="Q57953"/>
<dbReference type="OrthoDB" id="15347at2157"/>
<dbReference type="PhylomeDB" id="Q57953"/>
<dbReference type="Proteomes" id="UP000000805">
    <property type="component" value="Chromosome"/>
</dbReference>
<dbReference type="GO" id="GO:0051539">
    <property type="term" value="F:4 iron, 4 sulfur cluster binding"/>
    <property type="evidence" value="ECO:0007669"/>
    <property type="project" value="UniProtKB-KW"/>
</dbReference>
<dbReference type="GO" id="GO:0046872">
    <property type="term" value="F:metal ion binding"/>
    <property type="evidence" value="ECO:0007669"/>
    <property type="project" value="UniProtKB-KW"/>
</dbReference>
<dbReference type="GO" id="GO:0016491">
    <property type="term" value="F:oxidoreductase activity"/>
    <property type="evidence" value="ECO:0007669"/>
    <property type="project" value="UniProtKB-ARBA"/>
</dbReference>
<dbReference type="Gene3D" id="3.30.70.20">
    <property type="match status" value="1"/>
</dbReference>
<dbReference type="InterPro" id="IPR017896">
    <property type="entry name" value="4Fe4S_Fe-S-bd"/>
</dbReference>
<dbReference type="InterPro" id="IPR017900">
    <property type="entry name" value="4Fe4S_Fe_S_CS"/>
</dbReference>
<dbReference type="Pfam" id="PF00037">
    <property type="entry name" value="Fer4"/>
    <property type="match status" value="2"/>
</dbReference>
<dbReference type="SUPFAM" id="SSF54862">
    <property type="entry name" value="4Fe-4S ferredoxins"/>
    <property type="match status" value="1"/>
</dbReference>
<dbReference type="PROSITE" id="PS00198">
    <property type="entry name" value="4FE4S_FER_1"/>
    <property type="match status" value="2"/>
</dbReference>
<dbReference type="PROSITE" id="PS51379">
    <property type="entry name" value="4FE4S_FER_2"/>
    <property type="match status" value="2"/>
</dbReference>
<name>FERA_METJA</name>
<organism>
    <name type="scientific">Methanocaldococcus jannaschii (strain ATCC 43067 / DSM 2661 / JAL-1 / JCM 10045 / NBRC 100440)</name>
    <name type="common">Methanococcus jannaschii</name>
    <dbReference type="NCBI Taxonomy" id="243232"/>
    <lineage>
        <taxon>Archaea</taxon>
        <taxon>Methanobacteriati</taxon>
        <taxon>Methanobacteriota</taxon>
        <taxon>Methanomada group</taxon>
        <taxon>Methanococci</taxon>
        <taxon>Methanococcales</taxon>
        <taxon>Methanocaldococcaceae</taxon>
        <taxon>Methanocaldococcus</taxon>
    </lineage>
</organism>
<comment type="function">
    <text evidence="1">Ferredoxins are iron-sulfur proteins that transfer electrons in a wide variety of metabolic reactions.</text>
</comment>
<comment type="cofactor">
    <cofactor evidence="1">
        <name>[4Fe-4S] cluster</name>
        <dbReference type="ChEBI" id="CHEBI:49883"/>
    </cofactor>
    <text evidence="1">Binds 2 [4Fe-4S] clusters.</text>
</comment>
<evidence type="ECO:0000250" key="1"/>
<evidence type="ECO:0000255" key="2">
    <source>
        <dbReference type="PROSITE-ProRule" id="PRU00711"/>
    </source>
</evidence>
<sequence length="56" mass="6160">MVKIDYKKCGYCGACVGVCEKLAINLIEHIIVIDEKKCNNCKLCTIVCPLNALEGE</sequence>
<proteinExistence type="inferred from homology"/>
<reference key="1">
    <citation type="journal article" date="1996" name="Science">
        <title>Complete genome sequence of the methanogenic archaeon, Methanococcus jannaschii.</title>
        <authorList>
            <person name="Bult C.J."/>
            <person name="White O."/>
            <person name="Olsen G.J."/>
            <person name="Zhou L."/>
            <person name="Fleischmann R.D."/>
            <person name="Sutton G.G."/>
            <person name="Blake J.A."/>
            <person name="FitzGerald L.M."/>
            <person name="Clayton R.A."/>
            <person name="Gocayne J.D."/>
            <person name="Kerlavage A.R."/>
            <person name="Dougherty B.A."/>
            <person name="Tomb J.-F."/>
            <person name="Adams M.D."/>
            <person name="Reich C.I."/>
            <person name="Overbeek R."/>
            <person name="Kirkness E.F."/>
            <person name="Weinstock K.G."/>
            <person name="Merrick J.M."/>
            <person name="Glodek A."/>
            <person name="Scott J.L."/>
            <person name="Geoghagen N.S.M."/>
            <person name="Weidman J.F."/>
            <person name="Fuhrmann J.L."/>
            <person name="Nguyen D."/>
            <person name="Utterback T.R."/>
            <person name="Kelley J.M."/>
            <person name="Peterson J.D."/>
            <person name="Sadow P.W."/>
            <person name="Hanna M.C."/>
            <person name="Cotton M.D."/>
            <person name="Roberts K.M."/>
            <person name="Hurst M.A."/>
            <person name="Kaine B.P."/>
            <person name="Borodovsky M."/>
            <person name="Klenk H.-P."/>
            <person name="Fraser C.M."/>
            <person name="Smith H.O."/>
            <person name="Woese C.R."/>
            <person name="Venter J.C."/>
        </authorList>
    </citation>
    <scope>NUCLEOTIDE SEQUENCE [LARGE SCALE GENOMIC DNA]</scope>
    <source>
        <strain>ATCC 43067 / DSM 2661 / JAL-1 / JCM 10045 / NBRC 100440</strain>
    </source>
</reference>